<comment type="similarity">
    <text evidence="2">Belongs to the calmodulin family.</text>
</comment>
<name>CALN_CHICK</name>
<sequence length="131" mass="14847">EFKEAFSLFDKDGDGTITTKELGTVMRSLGQNPTEAELQDMINEVDADGNGTIDFPEFLTMMARKMKDTDSEEEIREAFRVFDKDSNGYISAAELRHVMTNLGEKLTDEEVDEMIREADIDGDGQVNYEEF</sequence>
<accession>P05419</accession>
<organism>
    <name type="scientific">Gallus gallus</name>
    <name type="common">Chicken</name>
    <dbReference type="NCBI Taxonomy" id="9031"/>
    <lineage>
        <taxon>Eukaryota</taxon>
        <taxon>Metazoa</taxon>
        <taxon>Chordata</taxon>
        <taxon>Craniata</taxon>
        <taxon>Vertebrata</taxon>
        <taxon>Euteleostomi</taxon>
        <taxon>Archelosauria</taxon>
        <taxon>Archosauria</taxon>
        <taxon>Dinosauria</taxon>
        <taxon>Saurischia</taxon>
        <taxon>Theropoda</taxon>
        <taxon>Coelurosauria</taxon>
        <taxon>Aves</taxon>
        <taxon>Neognathae</taxon>
        <taxon>Galloanserae</taxon>
        <taxon>Galliformes</taxon>
        <taxon>Phasianidae</taxon>
        <taxon>Phasianinae</taxon>
        <taxon>Gallus</taxon>
    </lineage>
</organism>
<feature type="chain" id="PRO_0000198329" description="Neo-calmodulin">
    <location>
        <begin position="1" status="less than"/>
        <end position="131" status="greater than"/>
    </location>
</feature>
<feature type="domain" description="EF-hand 1" evidence="1">
    <location>
        <begin position="1" status="less than"/>
        <end position="32"/>
    </location>
</feature>
<feature type="domain" description="EF-hand 2" evidence="1">
    <location>
        <begin position="33"/>
        <end position="68"/>
    </location>
</feature>
<feature type="domain" description="EF-hand 3" evidence="1">
    <location>
        <begin position="70"/>
        <end position="105"/>
    </location>
</feature>
<feature type="domain" description="EF-hand 4" evidence="1">
    <location>
        <begin position="106"/>
        <end position="131" status="greater than"/>
    </location>
</feature>
<feature type="binding site" evidence="1">
    <location>
        <position position="10"/>
    </location>
    <ligand>
        <name>Ca(2+)</name>
        <dbReference type="ChEBI" id="CHEBI:29108"/>
        <label>1</label>
    </ligand>
</feature>
<feature type="binding site" evidence="1">
    <location>
        <position position="12"/>
    </location>
    <ligand>
        <name>Ca(2+)</name>
        <dbReference type="ChEBI" id="CHEBI:29108"/>
        <label>1</label>
    </ligand>
</feature>
<feature type="binding site" evidence="1">
    <location>
        <position position="14"/>
    </location>
    <ligand>
        <name>Ca(2+)</name>
        <dbReference type="ChEBI" id="CHEBI:29108"/>
        <label>1</label>
    </ligand>
</feature>
<feature type="binding site" evidence="1">
    <location>
        <position position="16"/>
    </location>
    <ligand>
        <name>Ca(2+)</name>
        <dbReference type="ChEBI" id="CHEBI:29108"/>
        <label>1</label>
    </ligand>
</feature>
<feature type="binding site" evidence="1">
    <location>
        <position position="21"/>
    </location>
    <ligand>
        <name>Ca(2+)</name>
        <dbReference type="ChEBI" id="CHEBI:29108"/>
        <label>1</label>
    </ligand>
</feature>
<feature type="binding site" evidence="1">
    <location>
        <position position="46"/>
    </location>
    <ligand>
        <name>Ca(2+)</name>
        <dbReference type="ChEBI" id="CHEBI:29108"/>
        <label>2</label>
    </ligand>
</feature>
<feature type="binding site" evidence="1">
    <location>
        <position position="48"/>
    </location>
    <ligand>
        <name>Ca(2+)</name>
        <dbReference type="ChEBI" id="CHEBI:29108"/>
        <label>2</label>
    </ligand>
</feature>
<feature type="binding site" evidence="1">
    <location>
        <position position="50"/>
    </location>
    <ligand>
        <name>Ca(2+)</name>
        <dbReference type="ChEBI" id="CHEBI:29108"/>
        <label>2</label>
    </ligand>
</feature>
<feature type="binding site" evidence="1">
    <location>
        <position position="52"/>
    </location>
    <ligand>
        <name>Ca(2+)</name>
        <dbReference type="ChEBI" id="CHEBI:29108"/>
        <label>2</label>
    </ligand>
</feature>
<feature type="binding site" evidence="1">
    <location>
        <position position="57"/>
    </location>
    <ligand>
        <name>Ca(2+)</name>
        <dbReference type="ChEBI" id="CHEBI:29108"/>
        <label>2</label>
    </ligand>
</feature>
<feature type="binding site" evidence="1">
    <location>
        <position position="83"/>
    </location>
    <ligand>
        <name>Ca(2+)</name>
        <dbReference type="ChEBI" id="CHEBI:29108"/>
        <label>3</label>
    </ligand>
</feature>
<feature type="binding site" evidence="1">
    <location>
        <position position="85"/>
    </location>
    <ligand>
        <name>Ca(2+)</name>
        <dbReference type="ChEBI" id="CHEBI:29108"/>
        <label>3</label>
    </ligand>
</feature>
<feature type="binding site" evidence="1">
    <location>
        <position position="87"/>
    </location>
    <ligand>
        <name>Ca(2+)</name>
        <dbReference type="ChEBI" id="CHEBI:29108"/>
        <label>3</label>
    </ligand>
</feature>
<feature type="binding site" evidence="1">
    <location>
        <position position="89"/>
    </location>
    <ligand>
        <name>Ca(2+)</name>
        <dbReference type="ChEBI" id="CHEBI:29108"/>
        <label>3</label>
    </ligand>
</feature>
<feature type="binding site" evidence="1">
    <location>
        <position position="94"/>
    </location>
    <ligand>
        <name>Ca(2+)</name>
        <dbReference type="ChEBI" id="CHEBI:29108"/>
        <label>3</label>
    </ligand>
</feature>
<feature type="binding site" evidence="1">
    <location>
        <position position="119"/>
    </location>
    <ligand>
        <name>Ca(2+)</name>
        <dbReference type="ChEBI" id="CHEBI:29108"/>
        <label>4</label>
    </ligand>
</feature>
<feature type="binding site" evidence="1">
    <location>
        <position position="121"/>
    </location>
    <ligand>
        <name>Ca(2+)</name>
        <dbReference type="ChEBI" id="CHEBI:29108"/>
        <label>4</label>
    </ligand>
</feature>
<feature type="binding site" evidence="1">
    <location>
        <position position="123"/>
    </location>
    <ligand>
        <name>Ca(2+)</name>
        <dbReference type="ChEBI" id="CHEBI:29108"/>
        <label>4</label>
    </ligand>
</feature>
<feature type="binding site" evidence="1">
    <location>
        <position position="125"/>
    </location>
    <ligand>
        <name>Ca(2+)</name>
        <dbReference type="ChEBI" id="CHEBI:29108"/>
        <label>4</label>
    </ligand>
</feature>
<feature type="binding site" evidence="1">
    <location>
        <position position="130"/>
    </location>
    <ligand>
        <name>Ca(2+)</name>
        <dbReference type="ChEBI" id="CHEBI:29108"/>
        <label>4</label>
    </ligand>
</feature>
<feature type="non-terminal residue">
    <location>
        <position position="1"/>
    </location>
</feature>
<feature type="non-terminal residue">
    <location>
        <position position="131"/>
    </location>
</feature>
<dbReference type="EMBL" id="M18355">
    <property type="protein sequence ID" value="AAA48645.1"/>
    <property type="molecule type" value="mRNA"/>
</dbReference>
<dbReference type="PIR" id="A29422">
    <property type="entry name" value="A29422"/>
</dbReference>
<dbReference type="RefSeq" id="NP_001103834.1">
    <property type="nucleotide sequence ID" value="NM_001110364.1"/>
</dbReference>
<dbReference type="SMR" id="P05419"/>
<dbReference type="BioGRID" id="676768">
    <property type="interactions" value="2"/>
</dbReference>
<dbReference type="FunCoup" id="P05419">
    <property type="interactions" value="557"/>
</dbReference>
<dbReference type="IntAct" id="P05419">
    <property type="interactions" value="1"/>
</dbReference>
<dbReference type="GeneID" id="396523"/>
<dbReference type="KEGG" id="gga:396523"/>
<dbReference type="CTD" id="801"/>
<dbReference type="VEuPathDB" id="HostDB:geneid_396523"/>
<dbReference type="InParanoid" id="P05419"/>
<dbReference type="OrthoDB" id="26525at2759"/>
<dbReference type="Proteomes" id="UP000000539">
    <property type="component" value="Unassembled WGS sequence"/>
</dbReference>
<dbReference type="GO" id="GO:0005813">
    <property type="term" value="C:centrosome"/>
    <property type="evidence" value="ECO:0000318"/>
    <property type="project" value="GO_Central"/>
</dbReference>
<dbReference type="GO" id="GO:0005737">
    <property type="term" value="C:cytoplasm"/>
    <property type="evidence" value="ECO:0000318"/>
    <property type="project" value="GO_Central"/>
</dbReference>
<dbReference type="GO" id="GO:0043209">
    <property type="term" value="C:myelin sheath"/>
    <property type="evidence" value="ECO:0000318"/>
    <property type="project" value="GO_Central"/>
</dbReference>
<dbReference type="GO" id="GO:0005509">
    <property type="term" value="F:calcium ion binding"/>
    <property type="evidence" value="ECO:0000318"/>
    <property type="project" value="GO_Central"/>
</dbReference>
<dbReference type="CDD" id="cd00051">
    <property type="entry name" value="EFh"/>
    <property type="match status" value="2"/>
</dbReference>
<dbReference type="FunFam" id="1.10.238.10:FF:000527">
    <property type="entry name" value="Calmodulin-3"/>
    <property type="match status" value="1"/>
</dbReference>
<dbReference type="Gene3D" id="1.10.238.10">
    <property type="entry name" value="EF-hand"/>
    <property type="match status" value="2"/>
</dbReference>
<dbReference type="InterPro" id="IPR050230">
    <property type="entry name" value="CALM/Myosin/TropC-like"/>
</dbReference>
<dbReference type="InterPro" id="IPR011992">
    <property type="entry name" value="EF-hand-dom_pair"/>
</dbReference>
<dbReference type="InterPro" id="IPR018247">
    <property type="entry name" value="EF_Hand_1_Ca_BS"/>
</dbReference>
<dbReference type="InterPro" id="IPR002048">
    <property type="entry name" value="EF_hand_dom"/>
</dbReference>
<dbReference type="PANTHER" id="PTHR23048:SF0">
    <property type="entry name" value="CALMODULIN LIKE 3"/>
    <property type="match status" value="1"/>
</dbReference>
<dbReference type="PANTHER" id="PTHR23048">
    <property type="entry name" value="MYOSIN LIGHT CHAIN 1, 3"/>
    <property type="match status" value="1"/>
</dbReference>
<dbReference type="Pfam" id="PF13499">
    <property type="entry name" value="EF-hand_7"/>
    <property type="match status" value="2"/>
</dbReference>
<dbReference type="SMART" id="SM00054">
    <property type="entry name" value="EFh"/>
    <property type="match status" value="4"/>
</dbReference>
<dbReference type="SUPFAM" id="SSF47473">
    <property type="entry name" value="EF-hand"/>
    <property type="match status" value="1"/>
</dbReference>
<dbReference type="PROSITE" id="PS00018">
    <property type="entry name" value="EF_HAND_1"/>
    <property type="match status" value="4"/>
</dbReference>
<dbReference type="PROSITE" id="PS50222">
    <property type="entry name" value="EF_HAND_2"/>
    <property type="match status" value="4"/>
</dbReference>
<evidence type="ECO:0000255" key="1">
    <source>
        <dbReference type="PROSITE-ProRule" id="PRU00448"/>
    </source>
</evidence>
<evidence type="ECO:0000305" key="2"/>
<reference key="1">
    <citation type="journal article" date="1987" name="Biochemistry">
        <title>Immunoselection of cDNAs to avian intestinal calcium binding protein 28K and a novel calmodulin-like protein: assessment of mRNA regulation by the vitamin D hormone.</title>
        <authorList>
            <person name="Mangelsdorf D.J."/>
            <person name="Komm B.S."/>
            <person name="McDonnell D.P."/>
            <person name="Pike J.W."/>
            <person name="Haussler M.R."/>
        </authorList>
    </citation>
    <scope>NUCLEOTIDE SEQUENCE [MRNA]</scope>
</reference>
<keyword id="KW-0106">Calcium</keyword>
<keyword id="KW-0479">Metal-binding</keyword>
<keyword id="KW-1185">Reference proteome</keyword>
<keyword id="KW-0677">Repeat</keyword>
<protein>
    <recommendedName>
        <fullName>Neo-calmodulin</fullName>
        <shortName>NeoCaM</shortName>
    </recommendedName>
</protein>
<proteinExistence type="evidence at transcript level"/>